<reference key="1">
    <citation type="journal article" date="2001" name="Proc. Natl. Acad. Sci. U.S.A.">
        <title>Genome sequence of an industrial microorganism Streptomyces avermitilis: deducing the ability of producing secondary metabolites.</title>
        <authorList>
            <person name="Omura S."/>
            <person name="Ikeda H."/>
            <person name="Ishikawa J."/>
            <person name="Hanamoto A."/>
            <person name="Takahashi C."/>
            <person name="Shinose M."/>
            <person name="Takahashi Y."/>
            <person name="Horikawa H."/>
            <person name="Nakazawa H."/>
            <person name="Osonoe T."/>
            <person name="Kikuchi H."/>
            <person name="Shiba T."/>
            <person name="Sakaki Y."/>
            <person name="Hattori M."/>
        </authorList>
    </citation>
    <scope>NUCLEOTIDE SEQUENCE [LARGE SCALE GENOMIC DNA]</scope>
    <source>
        <strain>ATCC 31267 / DSM 46492 / JCM 5070 / NBRC 14893 / NCIMB 12804 / NRRL 8165 / MA-4680</strain>
    </source>
</reference>
<reference key="2">
    <citation type="journal article" date="2003" name="Nat. Biotechnol.">
        <title>Complete genome sequence and comparative analysis of the industrial microorganism Streptomyces avermitilis.</title>
        <authorList>
            <person name="Ikeda H."/>
            <person name="Ishikawa J."/>
            <person name="Hanamoto A."/>
            <person name="Shinose M."/>
            <person name="Kikuchi H."/>
            <person name="Shiba T."/>
            <person name="Sakaki Y."/>
            <person name="Hattori M."/>
            <person name="Omura S."/>
        </authorList>
    </citation>
    <scope>NUCLEOTIDE SEQUENCE [LARGE SCALE GENOMIC DNA]</scope>
    <source>
        <strain>ATCC 31267 / DSM 46492 / JCM 5070 / NBRC 14893 / NCIMB 12804 / NRRL 8165 / MA-4680</strain>
    </source>
</reference>
<dbReference type="EC" id="3.5.3.12" evidence="1"/>
<dbReference type="EMBL" id="BA000030">
    <property type="protein sequence ID" value="BAC70425.1"/>
    <property type="molecule type" value="Genomic_DNA"/>
</dbReference>
<dbReference type="RefSeq" id="WP_010984146.1">
    <property type="nucleotide sequence ID" value="NZ_JZJK01000071.1"/>
</dbReference>
<dbReference type="SMR" id="Q82JP0"/>
<dbReference type="GeneID" id="41539803"/>
<dbReference type="KEGG" id="sma:SAVERM_2714"/>
<dbReference type="eggNOG" id="COG2957">
    <property type="taxonomic scope" value="Bacteria"/>
</dbReference>
<dbReference type="HOGENOM" id="CLU_037682_0_0_11"/>
<dbReference type="OrthoDB" id="9808013at2"/>
<dbReference type="Proteomes" id="UP000000428">
    <property type="component" value="Chromosome"/>
</dbReference>
<dbReference type="GO" id="GO:0047632">
    <property type="term" value="F:agmatine deiminase activity"/>
    <property type="evidence" value="ECO:0007669"/>
    <property type="project" value="UniProtKB-UniRule"/>
</dbReference>
<dbReference type="GO" id="GO:0004668">
    <property type="term" value="F:protein-arginine deiminase activity"/>
    <property type="evidence" value="ECO:0007669"/>
    <property type="project" value="InterPro"/>
</dbReference>
<dbReference type="GO" id="GO:0009446">
    <property type="term" value="P:putrescine biosynthetic process"/>
    <property type="evidence" value="ECO:0007669"/>
    <property type="project" value="InterPro"/>
</dbReference>
<dbReference type="Gene3D" id="3.75.10.10">
    <property type="entry name" value="L-arginine/glycine Amidinotransferase, Chain A"/>
    <property type="match status" value="1"/>
</dbReference>
<dbReference type="HAMAP" id="MF_01841">
    <property type="entry name" value="Agmatine_deimin"/>
    <property type="match status" value="1"/>
</dbReference>
<dbReference type="InterPro" id="IPR017754">
    <property type="entry name" value="Agmatine_deiminase"/>
</dbReference>
<dbReference type="InterPro" id="IPR007466">
    <property type="entry name" value="Peptidyl-Arg-deiminase_porph"/>
</dbReference>
<dbReference type="PANTHER" id="PTHR31377">
    <property type="entry name" value="AGMATINE DEIMINASE-RELATED"/>
    <property type="match status" value="1"/>
</dbReference>
<dbReference type="PANTHER" id="PTHR31377:SF0">
    <property type="entry name" value="AGMATINE DEIMINASE-RELATED"/>
    <property type="match status" value="1"/>
</dbReference>
<dbReference type="Pfam" id="PF04371">
    <property type="entry name" value="PAD_porph"/>
    <property type="match status" value="1"/>
</dbReference>
<dbReference type="SUPFAM" id="SSF55909">
    <property type="entry name" value="Pentein"/>
    <property type="match status" value="1"/>
</dbReference>
<accession>Q82JP0</accession>
<sequence>MSTPAADGFRMPAEWTPHERTWMAWPGPNPTFDHPDDLAESCRAWADVARAIRRFEPVTVVCGPGRSAEARDLLGPGIDTVERDLDDAWMRDIGPTFLTDGKGGLAAVDWTFNGWGAQSWARWEHDAKIAAYVGDLAGAKTYASKLVNEGGAIHVDGEGTVLLTETVQLGAERNPGWTREQVETEIHAHLGTSKAIWLPRGLTGDYPPHGFGTLGHVDIVAAFARPGVVVAHHQPDPAHPDHEVSKEVIGLLKAATDAHGRRIEVVEVPAPTVLEADGHWADYSYINHYLCNGGVVLCGFDDPRDETAAGIFRRLFPERTVTLVDARTIFSGGGGIHCITQQQPKN</sequence>
<evidence type="ECO:0000255" key="1">
    <source>
        <dbReference type="HAMAP-Rule" id="MF_01841"/>
    </source>
</evidence>
<organism>
    <name type="scientific">Streptomyces avermitilis (strain ATCC 31267 / DSM 46492 / JCM 5070 / NBRC 14893 / NCIMB 12804 / NRRL 8165 / MA-4680)</name>
    <dbReference type="NCBI Taxonomy" id="227882"/>
    <lineage>
        <taxon>Bacteria</taxon>
        <taxon>Bacillati</taxon>
        <taxon>Actinomycetota</taxon>
        <taxon>Actinomycetes</taxon>
        <taxon>Kitasatosporales</taxon>
        <taxon>Streptomycetaceae</taxon>
        <taxon>Streptomyces</taxon>
    </lineage>
</organism>
<feature type="chain" id="PRO_0000194342" description="Putative agmatine deiminase">
    <location>
        <begin position="1"/>
        <end position="346"/>
    </location>
</feature>
<feature type="active site" description="Amidino-cysteine intermediate" evidence="1">
    <location>
        <position position="338"/>
    </location>
</feature>
<comment type="catalytic activity">
    <reaction evidence="1">
        <text>agmatine + H2O = N-carbamoylputrescine + NH4(+)</text>
        <dbReference type="Rhea" id="RHEA:18037"/>
        <dbReference type="ChEBI" id="CHEBI:15377"/>
        <dbReference type="ChEBI" id="CHEBI:28938"/>
        <dbReference type="ChEBI" id="CHEBI:58145"/>
        <dbReference type="ChEBI" id="CHEBI:58318"/>
        <dbReference type="EC" id="3.5.3.12"/>
    </reaction>
</comment>
<comment type="similarity">
    <text evidence="1">Belongs to the agmatine deiminase family.</text>
</comment>
<proteinExistence type="inferred from homology"/>
<gene>
    <name evidence="1" type="primary">aguA</name>
    <name type="ordered locus">SAV_2714</name>
</gene>
<name>AGUA_STRAW</name>
<protein>
    <recommendedName>
        <fullName evidence="1">Putative agmatine deiminase</fullName>
        <ecNumber evidence="1">3.5.3.12</ecNumber>
    </recommendedName>
    <alternativeName>
        <fullName evidence="1">Agmatine iminohydrolase</fullName>
    </alternativeName>
</protein>
<keyword id="KW-0378">Hydrolase</keyword>
<keyword id="KW-1185">Reference proteome</keyword>